<sequence>MEIENTRDSDSMRGSRVGFSGSLVSGKKSARFKDDESYVEITLDVRDDSVSVQNIKGADHEAALLASRLEKRPNNTLGSQLSFHLRQVSKELKRMTSSNKFQKIDRSKSGAARALRGLQFMNKNVGTEGWSEVESRFDQLAVNGMLTKSLFGQCIGMKESSEFAEELFDALARKRCITSPAVTKDELREFWEQITDTSFDARLQTFFDMVDKDADGRITQEEVKEIISLSASANKLSKIQDNSDEYAALIMEELDPGNVGYIELYNLETLLLQAPSHSMNLSTNSRVLSRMLSQKLKPTKERNPFKRCKRRLDYFIEDNWKRIWVMALWLSICAGLFTWKFIQYKRRAVFDVMGYCVSVAKGGAETTKFNMALVLLPVCRNTITWLRSRTKLGKIIPFDDNINFHKVIAFGIAVGVGLHAISHLTCDFPRLLHATDEEYEPMKPFFGDERPNNYWWFVKGTEGWTGVVMVVLMIIAYVLAQPWFRRNRLNLPSTIKKLTGFNAFWYSHHLFVIVYVLFIIHGYFLYLSKKWYKKTTWMYIAVPMILYACERLLRAFRSGYKAVKILKVAVYPGNVMAVHMSKPQGFKYTSGQYIFVNCSDVSSFQWHPFTISSAPGDDYLSMHIRTLGDWTSQLKTLFSKVCEPPTGDQSGLLRADVAKADYKPRLPKLLIDGPYGAPAQDYKKYDVVLLVGLGIGATPLISIVKDVLNNIKQQKNIEDGTKGSKRSPFATKRAYFYWVTREQGSFEWFKGVMDEVSENDQEGLIELHNYCTSVYEEGDARSALITMLQSIQQAKSGVDIVSGTRVKTHFARPNWRQVFKRVTINHPDQRIGVFYCGPQGLVGELRHLSQDFSHKTGTKFEFHKENF</sequence>
<reference key="1">
    <citation type="journal article" date="2001" name="Mol. Plant Microbe Interact.">
        <title>Induction of plant gp91 phox homolog by fungal cell wall, arachidonic acid, and salicylic acid in potato.</title>
        <authorList>
            <person name="Yoshioka H."/>
            <person name="Sugie K."/>
            <person name="Park H.-J."/>
            <person name="Maeda H."/>
            <person name="Tsuda N."/>
            <person name="Kawakita K."/>
            <person name="Doke N."/>
        </authorList>
    </citation>
    <scope>NUCLEOTIDE SEQUENCE [MRNA]</scope>
    <scope>FUNCTION</scope>
    <scope>INDUCTION</scope>
    <scope>ACTIVITY REGULATION</scope>
    <source>
        <strain>cv. Rishiri</strain>
    </source>
</reference>
<reference key="2">
    <citation type="journal article" date="2006" name="J. Exp. Bot.">
        <title>Subcellular localization of Strboh proteins and NADPH-dependent O2(-)-generating activity in potato tuber tissues.</title>
        <authorList>
            <person name="Kobayashi M."/>
            <person name="Kawakita K."/>
            <person name="Maeshima M."/>
            <person name="Doke N."/>
            <person name="Yoshioka H."/>
        </authorList>
    </citation>
    <scope>SUBCELLULAR LOCATION</scope>
    <scope>INDUCTION</scope>
    <source>
        <strain>cv. Rishiri</strain>
    </source>
</reference>
<reference key="3">
    <citation type="journal article" date="2007" name="Plant Cell">
        <title>Calcium-dependent protein kinases regulate the production of reactive oxygen species by potato NADPH oxidase.</title>
        <authorList>
            <person name="Kobayashi M."/>
            <person name="Ohura I."/>
            <person name="Kawakita K."/>
            <person name="Yokota N."/>
            <person name="Fujiwara M."/>
            <person name="Shimamoto K."/>
            <person name="Doke N."/>
            <person name="Yoshioka H."/>
        </authorList>
    </citation>
    <scope>MUTAGENESIS OF SER-82; SER-89 AND SER-97</scope>
    <scope>PHOSPHORYLATION AT SER-82 AND SER-97</scope>
    <scope>IDENTIFICATION BY MASS SPECTROMETRY</scope>
</reference>
<dbReference type="EC" id="1.11.1.-"/>
<dbReference type="EC" id="1.6.3.-"/>
<dbReference type="EMBL" id="AB050661">
    <property type="protein sequence ID" value="BAB70751.1"/>
    <property type="molecule type" value="mRNA"/>
</dbReference>
<dbReference type="RefSeq" id="NP_001274981.1">
    <property type="nucleotide sequence ID" value="NM_001288052.1"/>
</dbReference>
<dbReference type="SMR" id="Q948T9"/>
<dbReference type="FunCoup" id="Q948T9">
    <property type="interactions" value="372"/>
</dbReference>
<dbReference type="STRING" id="4113.Q948T9"/>
<dbReference type="PeroxiBase" id="4546">
    <property type="entry name" value="StRboh02"/>
</dbReference>
<dbReference type="iPTMnet" id="Q948T9"/>
<dbReference type="PaxDb" id="4113-PGSC0003DMT400063688"/>
<dbReference type="GeneID" id="102603596"/>
<dbReference type="KEGG" id="sot:102603596"/>
<dbReference type="eggNOG" id="KOG0039">
    <property type="taxonomic scope" value="Eukaryota"/>
</dbReference>
<dbReference type="InParanoid" id="Q948T9"/>
<dbReference type="OrthoDB" id="167398at2759"/>
<dbReference type="Proteomes" id="UP000011115">
    <property type="component" value="Unassembled WGS sequence"/>
</dbReference>
<dbReference type="ExpressionAtlas" id="Q948T9">
    <property type="expression patterns" value="baseline"/>
</dbReference>
<dbReference type="GO" id="GO:0005886">
    <property type="term" value="C:plasma membrane"/>
    <property type="evidence" value="ECO:0000314"/>
    <property type="project" value="CACAO"/>
</dbReference>
<dbReference type="GO" id="GO:0005509">
    <property type="term" value="F:calcium ion binding"/>
    <property type="evidence" value="ECO:0007669"/>
    <property type="project" value="InterPro"/>
</dbReference>
<dbReference type="GO" id="GO:0016174">
    <property type="term" value="F:NAD(P)H oxidase H2O2-forming activity"/>
    <property type="evidence" value="ECO:0000318"/>
    <property type="project" value="GO_Central"/>
</dbReference>
<dbReference type="GO" id="GO:0004601">
    <property type="term" value="F:peroxidase activity"/>
    <property type="evidence" value="ECO:0007669"/>
    <property type="project" value="UniProtKB-KW"/>
</dbReference>
<dbReference type="CDD" id="cd00051">
    <property type="entry name" value="EFh"/>
    <property type="match status" value="1"/>
</dbReference>
<dbReference type="CDD" id="cd06186">
    <property type="entry name" value="NOX_Duox_like_FAD_NADP"/>
    <property type="match status" value="1"/>
</dbReference>
<dbReference type="FunFam" id="1.10.238.10:FF:000049">
    <property type="entry name" value="Respiratory burst oxidase homolog A"/>
    <property type="match status" value="1"/>
</dbReference>
<dbReference type="FunFam" id="2.40.30.10:FF:000019">
    <property type="entry name" value="Respiratory burst oxidase homolog A"/>
    <property type="match status" value="1"/>
</dbReference>
<dbReference type="FunFam" id="3.40.50.80:FF:000007">
    <property type="entry name" value="Respiratory burst oxidase protein A"/>
    <property type="match status" value="1"/>
</dbReference>
<dbReference type="Gene3D" id="1.10.238.10">
    <property type="entry name" value="EF-hand"/>
    <property type="match status" value="1"/>
</dbReference>
<dbReference type="Gene3D" id="3.40.50.80">
    <property type="entry name" value="Nucleotide-binding domain of ferredoxin-NADP reductase (FNR) module"/>
    <property type="match status" value="1"/>
</dbReference>
<dbReference type="Gene3D" id="2.40.30.10">
    <property type="entry name" value="Translation factors"/>
    <property type="match status" value="1"/>
</dbReference>
<dbReference type="InterPro" id="IPR000778">
    <property type="entry name" value="Cyt_b245_heavy_chain"/>
</dbReference>
<dbReference type="InterPro" id="IPR011992">
    <property type="entry name" value="EF-hand-dom_pair"/>
</dbReference>
<dbReference type="InterPro" id="IPR018247">
    <property type="entry name" value="EF_Hand_1_Ca_BS"/>
</dbReference>
<dbReference type="InterPro" id="IPR002048">
    <property type="entry name" value="EF_hand_dom"/>
</dbReference>
<dbReference type="InterPro" id="IPR013112">
    <property type="entry name" value="FAD-bd_8"/>
</dbReference>
<dbReference type="InterPro" id="IPR017927">
    <property type="entry name" value="FAD-bd_FR_type"/>
</dbReference>
<dbReference type="InterPro" id="IPR013130">
    <property type="entry name" value="Fe3_Rdtase_TM_dom"/>
</dbReference>
<dbReference type="InterPro" id="IPR013121">
    <property type="entry name" value="Fe_red_NAD-bd_6"/>
</dbReference>
<dbReference type="InterPro" id="IPR039261">
    <property type="entry name" value="FNR_nucleotide-bd"/>
</dbReference>
<dbReference type="InterPro" id="IPR013623">
    <property type="entry name" value="NADPH_Ox"/>
</dbReference>
<dbReference type="InterPro" id="IPR050369">
    <property type="entry name" value="RBOH/FRE"/>
</dbReference>
<dbReference type="InterPro" id="IPR017938">
    <property type="entry name" value="Riboflavin_synthase-like_b-brl"/>
</dbReference>
<dbReference type="PANTHER" id="PTHR11972">
    <property type="entry name" value="NADPH OXIDASE"/>
    <property type="match status" value="1"/>
</dbReference>
<dbReference type="PANTHER" id="PTHR11972:SF64">
    <property type="entry name" value="RESPIRATORY BURST OXIDASE HOMOLOG PROTEIN B"/>
    <property type="match status" value="1"/>
</dbReference>
<dbReference type="Pfam" id="PF08022">
    <property type="entry name" value="FAD_binding_8"/>
    <property type="match status" value="1"/>
</dbReference>
<dbReference type="Pfam" id="PF01794">
    <property type="entry name" value="Ferric_reduct"/>
    <property type="match status" value="1"/>
</dbReference>
<dbReference type="Pfam" id="PF08030">
    <property type="entry name" value="NAD_binding_6"/>
    <property type="match status" value="1"/>
</dbReference>
<dbReference type="Pfam" id="PF08414">
    <property type="entry name" value="NADPH_Ox"/>
    <property type="match status" value="1"/>
</dbReference>
<dbReference type="PRINTS" id="PR00466">
    <property type="entry name" value="GP91PHOX"/>
</dbReference>
<dbReference type="SFLD" id="SFLDS00052">
    <property type="entry name" value="Ferric_Reductase_Domain"/>
    <property type="match status" value="1"/>
</dbReference>
<dbReference type="SFLD" id="SFLDG01168">
    <property type="entry name" value="Ferric_reductase_subgroup_(FRE"/>
    <property type="match status" value="1"/>
</dbReference>
<dbReference type="SFLD" id="SFLDG01169">
    <property type="entry name" value="NADPH_oxidase_subgroup_(NOX)"/>
    <property type="match status" value="1"/>
</dbReference>
<dbReference type="SMART" id="SM00054">
    <property type="entry name" value="EFh"/>
    <property type="match status" value="1"/>
</dbReference>
<dbReference type="SUPFAM" id="SSF47473">
    <property type="entry name" value="EF-hand"/>
    <property type="match status" value="1"/>
</dbReference>
<dbReference type="SUPFAM" id="SSF52343">
    <property type="entry name" value="Ferredoxin reductase-like, C-terminal NADP-linked domain"/>
    <property type="match status" value="1"/>
</dbReference>
<dbReference type="SUPFAM" id="SSF63380">
    <property type="entry name" value="Riboflavin synthase domain-like"/>
    <property type="match status" value="1"/>
</dbReference>
<dbReference type="PROSITE" id="PS00018">
    <property type="entry name" value="EF_HAND_1"/>
    <property type="match status" value="1"/>
</dbReference>
<dbReference type="PROSITE" id="PS50222">
    <property type="entry name" value="EF_HAND_2"/>
    <property type="match status" value="2"/>
</dbReference>
<dbReference type="PROSITE" id="PS51384">
    <property type="entry name" value="FAD_FR"/>
    <property type="match status" value="1"/>
</dbReference>
<protein>
    <recommendedName>
        <fullName>Respiratory burst oxidase homolog protein B</fullName>
        <ecNumber>1.11.1.-</ecNumber>
        <ecNumber>1.6.3.-</ecNumber>
    </recommendedName>
    <alternativeName>
        <fullName>NADPH oxidase RBOHB</fullName>
    </alternativeName>
    <alternativeName>
        <fullName>StRBOHB</fullName>
    </alternativeName>
</protein>
<comment type="function">
    <text evidence="6">Calcium-dependent NADPH oxidase that generates superoxide. Involved in the massive phase II oxidative burst induced by pathogen infection.</text>
</comment>
<comment type="activity regulation">
    <text evidence="6">Inhibited by diphenylene iodinium (DPI).</text>
</comment>
<comment type="subunit">
    <text evidence="1">Monomer and homodimer.</text>
</comment>
<comment type="subcellular location">
    <subcellularLocation>
        <location evidence="7">Cell membrane</location>
        <topology evidence="7">Multi-pass membrane protein</topology>
    </subcellularLocation>
</comment>
<comment type="induction">
    <text evidence="6 7">By fungal elicitor, arachidonic acid and salicylic acid.</text>
</comment>
<comment type="PTM">
    <text evidence="8">Phosphorylation at Ser-82 and Ser-97 is required for full activity of RBOHB. Not phosphorylated at Ser-89. Phosphorylation at Ser-82 is induced by fungal elicitor treatment.</text>
</comment>
<comment type="miscellaneous">
    <text>K252a and staurosporine, two protein kinase inhibitors, completely block the RBOHB induction by fungal elicitor.</text>
</comment>
<comment type="similarity">
    <text evidence="9">Belongs to the RBOH (TC 5.B.1.3) family.</text>
</comment>
<evidence type="ECO:0000250" key="1"/>
<evidence type="ECO:0000255" key="2"/>
<evidence type="ECO:0000255" key="3">
    <source>
        <dbReference type="PROSITE-ProRule" id="PRU00448"/>
    </source>
</evidence>
<evidence type="ECO:0000255" key="4">
    <source>
        <dbReference type="PROSITE-ProRule" id="PRU00716"/>
    </source>
</evidence>
<evidence type="ECO:0000256" key="5">
    <source>
        <dbReference type="SAM" id="MobiDB-lite"/>
    </source>
</evidence>
<evidence type="ECO:0000269" key="6">
    <source>
    </source>
</evidence>
<evidence type="ECO:0000269" key="7">
    <source>
    </source>
</evidence>
<evidence type="ECO:0000269" key="8">
    <source>
    </source>
</evidence>
<evidence type="ECO:0000305" key="9"/>
<keyword id="KW-0106">Calcium</keyword>
<keyword id="KW-1003">Cell membrane</keyword>
<keyword id="KW-0274">FAD</keyword>
<keyword id="KW-0285">Flavoprotein</keyword>
<keyword id="KW-0472">Membrane</keyword>
<keyword id="KW-0479">Metal-binding</keyword>
<keyword id="KW-0521">NADP</keyword>
<keyword id="KW-0560">Oxidoreductase</keyword>
<keyword id="KW-0575">Peroxidase</keyword>
<keyword id="KW-0597">Phosphoprotein</keyword>
<keyword id="KW-1185">Reference proteome</keyword>
<keyword id="KW-0677">Repeat</keyword>
<keyword id="KW-0812">Transmembrane</keyword>
<keyword id="KW-1133">Transmembrane helix</keyword>
<accession>Q948T9</accession>
<name>RBOHB_SOLTU</name>
<proteinExistence type="evidence at protein level"/>
<gene>
    <name type="primary">RBOHB</name>
</gene>
<organism>
    <name type="scientific">Solanum tuberosum</name>
    <name type="common">Potato</name>
    <dbReference type="NCBI Taxonomy" id="4113"/>
    <lineage>
        <taxon>Eukaryota</taxon>
        <taxon>Viridiplantae</taxon>
        <taxon>Streptophyta</taxon>
        <taxon>Embryophyta</taxon>
        <taxon>Tracheophyta</taxon>
        <taxon>Spermatophyta</taxon>
        <taxon>Magnoliopsida</taxon>
        <taxon>eudicotyledons</taxon>
        <taxon>Gunneridae</taxon>
        <taxon>Pentapetalae</taxon>
        <taxon>asterids</taxon>
        <taxon>lamiids</taxon>
        <taxon>Solanales</taxon>
        <taxon>Solanaceae</taxon>
        <taxon>Solanoideae</taxon>
        <taxon>Solaneae</taxon>
        <taxon>Solanum</taxon>
    </lineage>
</organism>
<feature type="chain" id="PRO_0000313764" description="Respiratory burst oxidase homolog protein B">
    <location>
        <begin position="1"/>
        <end position="867"/>
    </location>
</feature>
<feature type="topological domain" description="Cytoplasmic" evidence="2">
    <location>
        <begin position="1"/>
        <end position="322"/>
    </location>
</feature>
<feature type="transmembrane region" description="Helical; Name=1" evidence="2">
    <location>
        <begin position="323"/>
        <end position="343"/>
    </location>
</feature>
<feature type="topological domain" description="Extracellular" evidence="2">
    <location>
        <begin position="344"/>
        <end position="358"/>
    </location>
</feature>
<feature type="transmembrane region" description="Helical; Name=2" evidence="1">
    <location>
        <begin position="359"/>
        <end position="379"/>
    </location>
</feature>
<feature type="topological domain" description="Cytoplasmic" evidence="2">
    <location>
        <begin position="380"/>
        <end position="407"/>
    </location>
</feature>
<feature type="transmembrane region" description="Helical; Name=3" evidence="2">
    <location>
        <begin position="408"/>
        <end position="428"/>
    </location>
</feature>
<feature type="topological domain" description="Extracellular" evidence="2">
    <location>
        <begin position="429"/>
        <end position="463"/>
    </location>
</feature>
<feature type="transmembrane region" description="Helical; Name=4" evidence="2">
    <location>
        <begin position="464"/>
        <end position="484"/>
    </location>
</feature>
<feature type="topological domain" description="Cytoplasmic" evidence="2">
    <location>
        <begin position="485"/>
        <end position="506"/>
    </location>
</feature>
<feature type="transmembrane region" description="Helical; Name=5" evidence="2">
    <location>
        <begin position="507"/>
        <end position="527"/>
    </location>
</feature>
<feature type="topological domain" description="Extracellular" evidence="2">
    <location>
        <begin position="528"/>
        <end position="686"/>
    </location>
</feature>
<feature type="transmembrane region" description="Helical; Name=6" evidence="2">
    <location>
        <begin position="687"/>
        <end position="707"/>
    </location>
</feature>
<feature type="topological domain" description="Cytoplasmic" evidence="2">
    <location>
        <begin position="708"/>
        <end position="867"/>
    </location>
</feature>
<feature type="domain" description="EF-hand 1" evidence="3">
    <location>
        <begin position="198"/>
        <end position="233"/>
    </location>
</feature>
<feature type="domain" description="EF-hand 2" evidence="3">
    <location>
        <begin position="242"/>
        <end position="277"/>
    </location>
</feature>
<feature type="domain" description="Ferric oxidoreductase">
    <location>
        <begin position="361"/>
        <end position="519"/>
    </location>
</feature>
<feature type="domain" description="FAD-binding FR-type" evidence="4">
    <location>
        <begin position="558"/>
        <end position="681"/>
    </location>
</feature>
<feature type="region of interest" description="Disordered" evidence="5">
    <location>
        <begin position="1"/>
        <end position="20"/>
    </location>
</feature>
<feature type="region of interest" description="EF-hand-like 1" evidence="1">
    <location>
        <begin position="141"/>
        <end position="149"/>
    </location>
</feature>
<feature type="region of interest" description="EF-hand-like 2" evidence="1">
    <location>
        <begin position="175"/>
        <end position="186"/>
    </location>
</feature>
<feature type="compositionally biased region" description="Basic and acidic residues" evidence="5">
    <location>
        <begin position="1"/>
        <end position="13"/>
    </location>
</feature>
<feature type="binding site" evidence="3">
    <location>
        <position position="211"/>
    </location>
    <ligand>
        <name>Ca(2+)</name>
        <dbReference type="ChEBI" id="CHEBI:29108"/>
    </ligand>
</feature>
<feature type="binding site" evidence="3">
    <location>
        <position position="213"/>
    </location>
    <ligand>
        <name>Ca(2+)</name>
        <dbReference type="ChEBI" id="CHEBI:29108"/>
    </ligand>
</feature>
<feature type="binding site" evidence="3">
    <location>
        <position position="215"/>
    </location>
    <ligand>
        <name>Ca(2+)</name>
        <dbReference type="ChEBI" id="CHEBI:29108"/>
    </ligand>
</feature>
<feature type="binding site" evidence="3">
    <location>
        <position position="217"/>
    </location>
    <ligand>
        <name>Ca(2+)</name>
        <dbReference type="ChEBI" id="CHEBI:29108"/>
    </ligand>
</feature>
<feature type="binding site" evidence="3">
    <location>
        <position position="222"/>
    </location>
    <ligand>
        <name>Ca(2+)</name>
        <dbReference type="ChEBI" id="CHEBI:29108"/>
    </ligand>
</feature>
<feature type="modified residue" description="Phosphoserine; by CPK" evidence="8">
    <location>
        <position position="82"/>
    </location>
</feature>
<feature type="modified residue" description="Phosphoserine; by CPK" evidence="8">
    <location>
        <position position="97"/>
    </location>
</feature>
<feature type="mutagenesis site" description="Decreased activity." evidence="8">
    <original>S</original>
    <variation>A</variation>
    <location>
        <position position="82"/>
    </location>
</feature>
<feature type="mutagenesis site" description="No effect." evidence="8">
    <original>S</original>
    <variation>A</variation>
    <location>
        <position position="89"/>
    </location>
</feature>
<feature type="mutagenesis site" description="Decreased activity." evidence="8">
    <original>S</original>
    <variation>A</variation>
    <location>
        <position position="97"/>
    </location>
</feature>